<comment type="function">
    <text evidence="1">Part of the ABC transporter complex CysAWTP involved in sulfate/thiosulfate import. Responsible for energy coupling to the transport system.</text>
</comment>
<comment type="catalytic activity">
    <reaction evidence="1">
        <text>sulfate(out) + ATP + H2O = sulfate(in) + ADP + phosphate + H(+)</text>
        <dbReference type="Rhea" id="RHEA:10192"/>
        <dbReference type="ChEBI" id="CHEBI:15377"/>
        <dbReference type="ChEBI" id="CHEBI:15378"/>
        <dbReference type="ChEBI" id="CHEBI:16189"/>
        <dbReference type="ChEBI" id="CHEBI:30616"/>
        <dbReference type="ChEBI" id="CHEBI:43474"/>
        <dbReference type="ChEBI" id="CHEBI:456216"/>
        <dbReference type="EC" id="7.3.2.3"/>
    </reaction>
</comment>
<comment type="catalytic activity">
    <reaction evidence="1">
        <text>thiosulfate(out) + ATP + H2O = thiosulfate(in) + ADP + phosphate + H(+)</text>
        <dbReference type="Rhea" id="RHEA:29871"/>
        <dbReference type="ChEBI" id="CHEBI:15377"/>
        <dbReference type="ChEBI" id="CHEBI:15378"/>
        <dbReference type="ChEBI" id="CHEBI:30616"/>
        <dbReference type="ChEBI" id="CHEBI:33542"/>
        <dbReference type="ChEBI" id="CHEBI:43474"/>
        <dbReference type="ChEBI" id="CHEBI:456216"/>
        <dbReference type="EC" id="7.3.2.3"/>
    </reaction>
</comment>
<comment type="subunit">
    <text evidence="1">The complex is composed of two ATP-binding proteins (CysA), two transmembrane proteins (CysT and CysW) and a solute-binding protein (CysP).</text>
</comment>
<comment type="subcellular location">
    <subcellularLocation>
        <location evidence="1">Cell inner membrane</location>
        <topology evidence="1">Peripheral membrane protein</topology>
    </subcellularLocation>
</comment>
<comment type="similarity">
    <text evidence="1">Belongs to the ABC transporter superfamily. Sulfate/tungstate importer (TC 3.A.1.6) family.</text>
</comment>
<evidence type="ECO:0000255" key="1">
    <source>
        <dbReference type="HAMAP-Rule" id="MF_01701"/>
    </source>
</evidence>
<feature type="chain" id="PRO_0000092292" description="Sulfate/thiosulfate import ATP-binding protein CysA 1">
    <location>
        <begin position="1"/>
        <end position="376"/>
    </location>
</feature>
<feature type="domain" description="ABC transporter" evidence="1">
    <location>
        <begin position="3"/>
        <end position="237"/>
    </location>
</feature>
<feature type="binding site" evidence="1">
    <location>
        <begin position="35"/>
        <end position="42"/>
    </location>
    <ligand>
        <name>ATP</name>
        <dbReference type="ChEBI" id="CHEBI:30616"/>
    </ligand>
</feature>
<organism>
    <name type="scientific">Shewanella oneidensis (strain ATCC 700550 / JCM 31522 / CIP 106686 / LMG 19005 / NCIMB 14063 / MR-1)</name>
    <dbReference type="NCBI Taxonomy" id="211586"/>
    <lineage>
        <taxon>Bacteria</taxon>
        <taxon>Pseudomonadati</taxon>
        <taxon>Pseudomonadota</taxon>
        <taxon>Gammaproteobacteria</taxon>
        <taxon>Alteromonadales</taxon>
        <taxon>Shewanellaceae</taxon>
        <taxon>Shewanella</taxon>
    </lineage>
</organism>
<accession>Q8EBC3</accession>
<reference key="1">
    <citation type="journal article" date="2002" name="Nat. Biotechnol.">
        <title>Genome sequence of the dissimilatory metal ion-reducing bacterium Shewanella oneidensis.</title>
        <authorList>
            <person name="Heidelberg J.F."/>
            <person name="Paulsen I.T."/>
            <person name="Nelson K.E."/>
            <person name="Gaidos E.J."/>
            <person name="Nelson W.C."/>
            <person name="Read T.D."/>
            <person name="Eisen J.A."/>
            <person name="Seshadri R."/>
            <person name="Ward N.L."/>
            <person name="Methe B.A."/>
            <person name="Clayton R.A."/>
            <person name="Meyer T."/>
            <person name="Tsapin A."/>
            <person name="Scott J."/>
            <person name="Beanan M.J."/>
            <person name="Brinkac L.M."/>
            <person name="Daugherty S.C."/>
            <person name="DeBoy R.T."/>
            <person name="Dodson R.J."/>
            <person name="Durkin A.S."/>
            <person name="Haft D.H."/>
            <person name="Kolonay J.F."/>
            <person name="Madupu R."/>
            <person name="Peterson J.D."/>
            <person name="Umayam L.A."/>
            <person name="White O."/>
            <person name="Wolf A.M."/>
            <person name="Vamathevan J.J."/>
            <person name="Weidman J.F."/>
            <person name="Impraim M."/>
            <person name="Lee K."/>
            <person name="Berry K.J."/>
            <person name="Lee C."/>
            <person name="Mueller J."/>
            <person name="Khouri H.M."/>
            <person name="Gill J."/>
            <person name="Utterback T.R."/>
            <person name="McDonald L.A."/>
            <person name="Feldblyum T.V."/>
            <person name="Smith H.O."/>
            <person name="Venter J.C."/>
            <person name="Nealson K.H."/>
            <person name="Fraser C.M."/>
        </authorList>
    </citation>
    <scope>NUCLEOTIDE SEQUENCE [LARGE SCALE GENOMIC DNA]</scope>
    <source>
        <strain>ATCC 700550 / JCM 31522 / CIP 106686 / LMG 19005 / NCIMB 14063 / MR-1</strain>
    </source>
</reference>
<proteinExistence type="inferred from homology"/>
<dbReference type="EC" id="7.3.2.3" evidence="1"/>
<dbReference type="EMBL" id="AE014299">
    <property type="protein sequence ID" value="AAN56589.1"/>
    <property type="molecule type" value="Genomic_DNA"/>
</dbReference>
<dbReference type="RefSeq" id="NP_719145.1">
    <property type="nucleotide sequence ID" value="NC_004347.2"/>
</dbReference>
<dbReference type="RefSeq" id="WP_011073420.1">
    <property type="nucleotide sequence ID" value="NC_004347.2"/>
</dbReference>
<dbReference type="SMR" id="Q8EBC3"/>
<dbReference type="STRING" id="211586.SO_3602"/>
<dbReference type="PaxDb" id="211586-SO_3602"/>
<dbReference type="KEGG" id="son:SO_3602"/>
<dbReference type="PATRIC" id="fig|211586.12.peg.3496"/>
<dbReference type="eggNOG" id="COG1118">
    <property type="taxonomic scope" value="Bacteria"/>
</dbReference>
<dbReference type="HOGENOM" id="CLU_000604_1_1_6"/>
<dbReference type="OrthoDB" id="9802264at2"/>
<dbReference type="PhylomeDB" id="Q8EBC3"/>
<dbReference type="BioCyc" id="SONE211586:G1GMP-3360-MONOMER"/>
<dbReference type="Proteomes" id="UP000008186">
    <property type="component" value="Chromosome"/>
</dbReference>
<dbReference type="GO" id="GO:0043190">
    <property type="term" value="C:ATP-binding cassette (ABC) transporter complex"/>
    <property type="evidence" value="ECO:0007669"/>
    <property type="project" value="InterPro"/>
</dbReference>
<dbReference type="GO" id="GO:0015419">
    <property type="term" value="F:ABC-type sulfate transporter activity"/>
    <property type="evidence" value="ECO:0007669"/>
    <property type="project" value="InterPro"/>
</dbReference>
<dbReference type="GO" id="GO:0102025">
    <property type="term" value="F:ABC-type thiosulfate transporter activity"/>
    <property type="evidence" value="ECO:0007669"/>
    <property type="project" value="RHEA"/>
</dbReference>
<dbReference type="GO" id="GO:0005524">
    <property type="term" value="F:ATP binding"/>
    <property type="evidence" value="ECO:0007669"/>
    <property type="project" value="UniProtKB-KW"/>
</dbReference>
<dbReference type="GO" id="GO:0016887">
    <property type="term" value="F:ATP hydrolysis activity"/>
    <property type="evidence" value="ECO:0007669"/>
    <property type="project" value="InterPro"/>
</dbReference>
<dbReference type="GO" id="GO:1902358">
    <property type="term" value="P:sulfate transmembrane transport"/>
    <property type="evidence" value="ECO:0000318"/>
    <property type="project" value="GO_Central"/>
</dbReference>
<dbReference type="CDD" id="cd03296">
    <property type="entry name" value="ABC_CysA_sulfate_importer"/>
    <property type="match status" value="1"/>
</dbReference>
<dbReference type="FunFam" id="3.40.50.300:FF:002493">
    <property type="entry name" value="Sulfate/thiosulfate import ATP-binding protein CysA"/>
    <property type="match status" value="1"/>
</dbReference>
<dbReference type="Gene3D" id="3.40.50.300">
    <property type="entry name" value="P-loop containing nucleotide triphosphate hydrolases"/>
    <property type="match status" value="1"/>
</dbReference>
<dbReference type="InterPro" id="IPR003593">
    <property type="entry name" value="AAA+_ATPase"/>
</dbReference>
<dbReference type="InterPro" id="IPR050093">
    <property type="entry name" value="ABC_SmlMolc_Importer"/>
</dbReference>
<dbReference type="InterPro" id="IPR003439">
    <property type="entry name" value="ABC_transporter-like_ATP-bd"/>
</dbReference>
<dbReference type="InterPro" id="IPR017871">
    <property type="entry name" value="ABC_transporter-like_CS"/>
</dbReference>
<dbReference type="InterPro" id="IPR008995">
    <property type="entry name" value="Mo/tungstate-bd_C_term_dom"/>
</dbReference>
<dbReference type="InterPro" id="IPR027417">
    <property type="entry name" value="P-loop_NTPase"/>
</dbReference>
<dbReference type="InterPro" id="IPR005666">
    <property type="entry name" value="Sulph_transpt1"/>
</dbReference>
<dbReference type="InterPro" id="IPR024765">
    <property type="entry name" value="TOBE-like"/>
</dbReference>
<dbReference type="NCBIfam" id="TIGR00968">
    <property type="entry name" value="3a0106s01"/>
    <property type="match status" value="1"/>
</dbReference>
<dbReference type="PANTHER" id="PTHR42781">
    <property type="entry name" value="SPERMIDINE/PUTRESCINE IMPORT ATP-BINDING PROTEIN POTA"/>
    <property type="match status" value="1"/>
</dbReference>
<dbReference type="PANTHER" id="PTHR42781:SF4">
    <property type="entry name" value="SPERMIDINE_PUTRESCINE IMPORT ATP-BINDING PROTEIN POTA"/>
    <property type="match status" value="1"/>
</dbReference>
<dbReference type="Pfam" id="PF00005">
    <property type="entry name" value="ABC_tran"/>
    <property type="match status" value="1"/>
</dbReference>
<dbReference type="Pfam" id="PF12857">
    <property type="entry name" value="TOBE_3"/>
    <property type="match status" value="1"/>
</dbReference>
<dbReference type="SMART" id="SM00382">
    <property type="entry name" value="AAA"/>
    <property type="match status" value="1"/>
</dbReference>
<dbReference type="SUPFAM" id="SSF50331">
    <property type="entry name" value="MOP-like"/>
    <property type="match status" value="1"/>
</dbReference>
<dbReference type="SUPFAM" id="SSF52540">
    <property type="entry name" value="P-loop containing nucleoside triphosphate hydrolases"/>
    <property type="match status" value="1"/>
</dbReference>
<dbReference type="PROSITE" id="PS00211">
    <property type="entry name" value="ABC_TRANSPORTER_1"/>
    <property type="match status" value="1"/>
</dbReference>
<dbReference type="PROSITE" id="PS50893">
    <property type="entry name" value="ABC_TRANSPORTER_2"/>
    <property type="match status" value="1"/>
</dbReference>
<dbReference type="PROSITE" id="PS51237">
    <property type="entry name" value="CYSA"/>
    <property type="match status" value="1"/>
</dbReference>
<sequence length="376" mass="42193">MSIRLTNISKKFGQFQALSPLNLDIQEGEMIGLLGPSGSGKTTLLRIIAGLEGADSGHIHFGNRDVTQVHVRDRRVGFVFQNYALFRHMTVADNVAFGLEVIPKKQRPSAAEIQKRVSHLLEMVQLGHLAQRYPEQLSGGQKQRIALARALATQPEVLLLDEPFGALDAKVRKELRRWLRSLHDELKFTSVFVTHDQDEALELSDRVVVMSNGNIEQVNTPIELYAQPNSRFVFDFLGNVNRFEANWQQNRWTNGDAFIVPPEQTPLQQNGALYVRSHELALADKPNSQAHIPFTIVAITPIGAEVRVELAPIGWQSEELWEAKFTHHHLQELGLQKGSVVYATPRTGYFFGKQGDGSPIRQSWPFLPPGSLAFDI</sequence>
<name>CYSA1_SHEON</name>
<keyword id="KW-0067">ATP-binding</keyword>
<keyword id="KW-0997">Cell inner membrane</keyword>
<keyword id="KW-1003">Cell membrane</keyword>
<keyword id="KW-0472">Membrane</keyword>
<keyword id="KW-0547">Nucleotide-binding</keyword>
<keyword id="KW-1185">Reference proteome</keyword>
<keyword id="KW-0764">Sulfate transport</keyword>
<keyword id="KW-1278">Translocase</keyword>
<keyword id="KW-0813">Transport</keyword>
<gene>
    <name evidence="1" type="primary">cysA1</name>
    <name type="synonym">cysA-1</name>
    <name type="ordered locus">SO_3602</name>
</gene>
<protein>
    <recommendedName>
        <fullName evidence="1">Sulfate/thiosulfate import ATP-binding protein CysA 1</fullName>
        <ecNumber evidence="1">7.3.2.3</ecNumber>
    </recommendedName>
    <alternativeName>
        <fullName evidence="1">Sulfate-transporting ATPase 1</fullName>
    </alternativeName>
</protein>